<protein>
    <recommendedName>
        <fullName evidence="1">Aspartyl/glutamyl-tRNA(Asn/Gln) amidotransferase subunit C</fullName>
        <shortName evidence="1">Asp/Glu-ADT subunit C</shortName>
        <ecNumber evidence="1">6.3.5.-</ecNumber>
    </recommendedName>
</protein>
<reference key="1">
    <citation type="submission" date="2009-01" db="EMBL/GenBank/DDBJ databases">
        <title>Complete sequence of Chloroflexus sp. Y-400-fl.</title>
        <authorList>
            <consortium name="US DOE Joint Genome Institute"/>
            <person name="Lucas S."/>
            <person name="Copeland A."/>
            <person name="Lapidus A."/>
            <person name="Glavina del Rio T."/>
            <person name="Dalin E."/>
            <person name="Tice H."/>
            <person name="Bruce D."/>
            <person name="Goodwin L."/>
            <person name="Pitluck S."/>
            <person name="Sims D."/>
            <person name="Kiss H."/>
            <person name="Brettin T."/>
            <person name="Detter J.C."/>
            <person name="Han C."/>
            <person name="Larimer F."/>
            <person name="Land M."/>
            <person name="Hauser L."/>
            <person name="Kyrpides N."/>
            <person name="Ovchinnikova G."/>
            <person name="Bryant D.A."/>
            <person name="Richardson P."/>
        </authorList>
    </citation>
    <scope>NUCLEOTIDE SEQUENCE [LARGE SCALE GENOMIC DNA]</scope>
    <source>
        <strain>ATCC 29364 / DSM 637 / Y-400-fl</strain>
    </source>
</reference>
<comment type="function">
    <text evidence="1">Allows the formation of correctly charged Asn-tRNA(Asn) or Gln-tRNA(Gln) through the transamidation of misacylated Asp-tRNA(Asn) or Glu-tRNA(Gln) in organisms which lack either or both of asparaginyl-tRNA or glutaminyl-tRNA synthetases. The reaction takes place in the presence of glutamine and ATP through an activated phospho-Asp-tRNA(Asn) or phospho-Glu-tRNA(Gln).</text>
</comment>
<comment type="catalytic activity">
    <reaction evidence="1">
        <text>L-glutamyl-tRNA(Gln) + L-glutamine + ATP + H2O = L-glutaminyl-tRNA(Gln) + L-glutamate + ADP + phosphate + H(+)</text>
        <dbReference type="Rhea" id="RHEA:17521"/>
        <dbReference type="Rhea" id="RHEA-COMP:9681"/>
        <dbReference type="Rhea" id="RHEA-COMP:9684"/>
        <dbReference type="ChEBI" id="CHEBI:15377"/>
        <dbReference type="ChEBI" id="CHEBI:15378"/>
        <dbReference type="ChEBI" id="CHEBI:29985"/>
        <dbReference type="ChEBI" id="CHEBI:30616"/>
        <dbReference type="ChEBI" id="CHEBI:43474"/>
        <dbReference type="ChEBI" id="CHEBI:58359"/>
        <dbReference type="ChEBI" id="CHEBI:78520"/>
        <dbReference type="ChEBI" id="CHEBI:78521"/>
        <dbReference type="ChEBI" id="CHEBI:456216"/>
    </reaction>
</comment>
<comment type="catalytic activity">
    <reaction evidence="1">
        <text>L-aspartyl-tRNA(Asn) + L-glutamine + ATP + H2O = L-asparaginyl-tRNA(Asn) + L-glutamate + ADP + phosphate + 2 H(+)</text>
        <dbReference type="Rhea" id="RHEA:14513"/>
        <dbReference type="Rhea" id="RHEA-COMP:9674"/>
        <dbReference type="Rhea" id="RHEA-COMP:9677"/>
        <dbReference type="ChEBI" id="CHEBI:15377"/>
        <dbReference type="ChEBI" id="CHEBI:15378"/>
        <dbReference type="ChEBI" id="CHEBI:29985"/>
        <dbReference type="ChEBI" id="CHEBI:30616"/>
        <dbReference type="ChEBI" id="CHEBI:43474"/>
        <dbReference type="ChEBI" id="CHEBI:58359"/>
        <dbReference type="ChEBI" id="CHEBI:78515"/>
        <dbReference type="ChEBI" id="CHEBI:78516"/>
        <dbReference type="ChEBI" id="CHEBI:456216"/>
    </reaction>
</comment>
<comment type="subunit">
    <text evidence="1">Heterotrimer of A, B and C subunits.</text>
</comment>
<comment type="similarity">
    <text evidence="1">Belongs to the GatC family.</text>
</comment>
<evidence type="ECO:0000255" key="1">
    <source>
        <dbReference type="HAMAP-Rule" id="MF_00122"/>
    </source>
</evidence>
<gene>
    <name evidence="1" type="primary">gatC</name>
    <name type="ordered locus">Chy400_1548</name>
</gene>
<proteinExistence type="inferred from homology"/>
<sequence>MALSEAEVRHVARLARIALSDEEIALMQAQLSAILDYIAMLQEVDVSNVPPTAQVTGLTTVWRPDVVGEMLTQEQALANAPDQQDGMFRVRAVFDE</sequence>
<keyword id="KW-0067">ATP-binding</keyword>
<keyword id="KW-0436">Ligase</keyword>
<keyword id="KW-0547">Nucleotide-binding</keyword>
<keyword id="KW-0648">Protein biosynthesis</keyword>
<accession>B9LCU6</accession>
<organism>
    <name type="scientific">Chloroflexus aurantiacus (strain ATCC 29364 / DSM 637 / Y-400-fl)</name>
    <dbReference type="NCBI Taxonomy" id="480224"/>
    <lineage>
        <taxon>Bacteria</taxon>
        <taxon>Bacillati</taxon>
        <taxon>Chloroflexota</taxon>
        <taxon>Chloroflexia</taxon>
        <taxon>Chloroflexales</taxon>
        <taxon>Chloroflexineae</taxon>
        <taxon>Chloroflexaceae</taxon>
        <taxon>Chloroflexus</taxon>
    </lineage>
</organism>
<name>GATC_CHLSY</name>
<dbReference type="EC" id="6.3.5.-" evidence="1"/>
<dbReference type="EMBL" id="CP001364">
    <property type="protein sequence ID" value="ACM52966.1"/>
    <property type="molecule type" value="Genomic_DNA"/>
</dbReference>
<dbReference type="SMR" id="B9LCU6"/>
<dbReference type="KEGG" id="chl:Chy400_1548"/>
<dbReference type="HOGENOM" id="CLU_105899_1_0_0"/>
<dbReference type="OrthoDB" id="9813938at2"/>
<dbReference type="GO" id="GO:0050566">
    <property type="term" value="F:asparaginyl-tRNA synthase (glutamine-hydrolyzing) activity"/>
    <property type="evidence" value="ECO:0007669"/>
    <property type="project" value="RHEA"/>
</dbReference>
<dbReference type="GO" id="GO:0005524">
    <property type="term" value="F:ATP binding"/>
    <property type="evidence" value="ECO:0007669"/>
    <property type="project" value="UniProtKB-KW"/>
</dbReference>
<dbReference type="GO" id="GO:0050567">
    <property type="term" value="F:glutaminyl-tRNA synthase (glutamine-hydrolyzing) activity"/>
    <property type="evidence" value="ECO:0007669"/>
    <property type="project" value="UniProtKB-UniRule"/>
</dbReference>
<dbReference type="GO" id="GO:0070681">
    <property type="term" value="P:glutaminyl-tRNAGln biosynthesis via transamidation"/>
    <property type="evidence" value="ECO:0007669"/>
    <property type="project" value="TreeGrafter"/>
</dbReference>
<dbReference type="GO" id="GO:0006450">
    <property type="term" value="P:regulation of translational fidelity"/>
    <property type="evidence" value="ECO:0007669"/>
    <property type="project" value="InterPro"/>
</dbReference>
<dbReference type="GO" id="GO:0006412">
    <property type="term" value="P:translation"/>
    <property type="evidence" value="ECO:0007669"/>
    <property type="project" value="UniProtKB-UniRule"/>
</dbReference>
<dbReference type="Gene3D" id="1.10.20.60">
    <property type="entry name" value="Glu-tRNAGln amidotransferase C subunit, N-terminal domain"/>
    <property type="match status" value="1"/>
</dbReference>
<dbReference type="HAMAP" id="MF_00122">
    <property type="entry name" value="GatC"/>
    <property type="match status" value="1"/>
</dbReference>
<dbReference type="InterPro" id="IPR036113">
    <property type="entry name" value="Asp/Glu-ADT_sf_sub_c"/>
</dbReference>
<dbReference type="InterPro" id="IPR003837">
    <property type="entry name" value="GatC"/>
</dbReference>
<dbReference type="NCBIfam" id="TIGR00135">
    <property type="entry name" value="gatC"/>
    <property type="match status" value="1"/>
</dbReference>
<dbReference type="PANTHER" id="PTHR15004">
    <property type="entry name" value="GLUTAMYL-TRNA(GLN) AMIDOTRANSFERASE SUBUNIT C, MITOCHONDRIAL"/>
    <property type="match status" value="1"/>
</dbReference>
<dbReference type="PANTHER" id="PTHR15004:SF0">
    <property type="entry name" value="GLUTAMYL-TRNA(GLN) AMIDOTRANSFERASE SUBUNIT C, MITOCHONDRIAL"/>
    <property type="match status" value="1"/>
</dbReference>
<dbReference type="Pfam" id="PF02686">
    <property type="entry name" value="GatC"/>
    <property type="match status" value="1"/>
</dbReference>
<dbReference type="SUPFAM" id="SSF141000">
    <property type="entry name" value="Glu-tRNAGln amidotransferase C subunit"/>
    <property type="match status" value="1"/>
</dbReference>
<feature type="chain" id="PRO_1000122560" description="Aspartyl/glutamyl-tRNA(Asn/Gln) amidotransferase subunit C">
    <location>
        <begin position="1"/>
        <end position="96"/>
    </location>
</feature>